<evidence type="ECO:0000255" key="1">
    <source>
        <dbReference type="HAMAP-Rule" id="MF_01218"/>
    </source>
</evidence>
<accession>A3D3D2</accession>
<dbReference type="EC" id="2.4.2.9" evidence="1"/>
<dbReference type="EMBL" id="CP000563">
    <property type="protein sequence ID" value="ABN61245.1"/>
    <property type="molecule type" value="Genomic_DNA"/>
</dbReference>
<dbReference type="RefSeq" id="WP_006081245.1">
    <property type="nucleotide sequence ID" value="NC_009052.1"/>
</dbReference>
<dbReference type="SMR" id="A3D3D2"/>
<dbReference type="STRING" id="325240.Sbal_1736"/>
<dbReference type="GeneID" id="11771991"/>
<dbReference type="KEGG" id="sbl:Sbal_1736"/>
<dbReference type="HOGENOM" id="CLU_067096_2_2_6"/>
<dbReference type="OrthoDB" id="9781675at2"/>
<dbReference type="UniPathway" id="UPA00574">
    <property type="reaction ID" value="UER00636"/>
</dbReference>
<dbReference type="Proteomes" id="UP000001557">
    <property type="component" value="Chromosome"/>
</dbReference>
<dbReference type="GO" id="GO:0005525">
    <property type="term" value="F:GTP binding"/>
    <property type="evidence" value="ECO:0007669"/>
    <property type="project" value="UniProtKB-KW"/>
</dbReference>
<dbReference type="GO" id="GO:0000287">
    <property type="term" value="F:magnesium ion binding"/>
    <property type="evidence" value="ECO:0007669"/>
    <property type="project" value="UniProtKB-UniRule"/>
</dbReference>
<dbReference type="GO" id="GO:0004845">
    <property type="term" value="F:uracil phosphoribosyltransferase activity"/>
    <property type="evidence" value="ECO:0007669"/>
    <property type="project" value="UniProtKB-UniRule"/>
</dbReference>
<dbReference type="GO" id="GO:0044206">
    <property type="term" value="P:UMP salvage"/>
    <property type="evidence" value="ECO:0007669"/>
    <property type="project" value="UniProtKB-UniRule"/>
</dbReference>
<dbReference type="GO" id="GO:0006223">
    <property type="term" value="P:uracil salvage"/>
    <property type="evidence" value="ECO:0007669"/>
    <property type="project" value="InterPro"/>
</dbReference>
<dbReference type="CDD" id="cd06223">
    <property type="entry name" value="PRTases_typeI"/>
    <property type="match status" value="1"/>
</dbReference>
<dbReference type="FunFam" id="3.40.50.2020:FF:000003">
    <property type="entry name" value="Uracil phosphoribosyltransferase"/>
    <property type="match status" value="1"/>
</dbReference>
<dbReference type="Gene3D" id="3.40.50.2020">
    <property type="match status" value="1"/>
</dbReference>
<dbReference type="HAMAP" id="MF_01218_B">
    <property type="entry name" value="Upp_B"/>
    <property type="match status" value="1"/>
</dbReference>
<dbReference type="InterPro" id="IPR000836">
    <property type="entry name" value="PRibTrfase_dom"/>
</dbReference>
<dbReference type="InterPro" id="IPR029057">
    <property type="entry name" value="PRTase-like"/>
</dbReference>
<dbReference type="InterPro" id="IPR034332">
    <property type="entry name" value="Upp_B"/>
</dbReference>
<dbReference type="InterPro" id="IPR050054">
    <property type="entry name" value="UPRTase/APRTase"/>
</dbReference>
<dbReference type="InterPro" id="IPR005765">
    <property type="entry name" value="Ura_phspho_trans"/>
</dbReference>
<dbReference type="NCBIfam" id="NF001097">
    <property type="entry name" value="PRK00129.1"/>
    <property type="match status" value="1"/>
</dbReference>
<dbReference type="NCBIfam" id="TIGR01091">
    <property type="entry name" value="upp"/>
    <property type="match status" value="1"/>
</dbReference>
<dbReference type="PANTHER" id="PTHR32315">
    <property type="entry name" value="ADENINE PHOSPHORIBOSYLTRANSFERASE"/>
    <property type="match status" value="1"/>
</dbReference>
<dbReference type="PANTHER" id="PTHR32315:SF4">
    <property type="entry name" value="URACIL PHOSPHORIBOSYLTRANSFERASE, CHLOROPLASTIC"/>
    <property type="match status" value="1"/>
</dbReference>
<dbReference type="Pfam" id="PF14681">
    <property type="entry name" value="UPRTase"/>
    <property type="match status" value="1"/>
</dbReference>
<dbReference type="SUPFAM" id="SSF53271">
    <property type="entry name" value="PRTase-like"/>
    <property type="match status" value="1"/>
</dbReference>
<gene>
    <name evidence="1" type="primary">upp</name>
    <name type="ordered locus">Sbal_1736</name>
</gene>
<proteinExistence type="inferred from homology"/>
<keyword id="KW-0021">Allosteric enzyme</keyword>
<keyword id="KW-0328">Glycosyltransferase</keyword>
<keyword id="KW-0342">GTP-binding</keyword>
<keyword id="KW-0460">Magnesium</keyword>
<keyword id="KW-0547">Nucleotide-binding</keyword>
<keyword id="KW-1185">Reference proteome</keyword>
<keyword id="KW-0808">Transferase</keyword>
<organism>
    <name type="scientific">Shewanella baltica (strain OS155 / ATCC BAA-1091)</name>
    <dbReference type="NCBI Taxonomy" id="325240"/>
    <lineage>
        <taxon>Bacteria</taxon>
        <taxon>Pseudomonadati</taxon>
        <taxon>Pseudomonadota</taxon>
        <taxon>Gammaproteobacteria</taxon>
        <taxon>Alteromonadales</taxon>
        <taxon>Shewanellaceae</taxon>
        <taxon>Shewanella</taxon>
    </lineage>
</organism>
<name>UPP_SHEB5</name>
<protein>
    <recommendedName>
        <fullName evidence="1">Uracil phosphoribosyltransferase</fullName>
        <ecNumber evidence="1">2.4.2.9</ecNumber>
    </recommendedName>
    <alternativeName>
        <fullName evidence="1">UMP pyrophosphorylase</fullName>
    </alternativeName>
    <alternativeName>
        <fullName evidence="1">UPRTase</fullName>
    </alternativeName>
</protein>
<feature type="chain" id="PRO_1000053777" description="Uracil phosphoribosyltransferase">
    <location>
        <begin position="1"/>
        <end position="208"/>
    </location>
</feature>
<feature type="binding site" evidence="1">
    <location>
        <position position="78"/>
    </location>
    <ligand>
        <name>5-phospho-alpha-D-ribose 1-diphosphate</name>
        <dbReference type="ChEBI" id="CHEBI:58017"/>
    </ligand>
</feature>
<feature type="binding site" evidence="1">
    <location>
        <position position="103"/>
    </location>
    <ligand>
        <name>5-phospho-alpha-D-ribose 1-diphosphate</name>
        <dbReference type="ChEBI" id="CHEBI:58017"/>
    </ligand>
</feature>
<feature type="binding site" evidence="1">
    <location>
        <begin position="130"/>
        <end position="138"/>
    </location>
    <ligand>
        <name>5-phospho-alpha-D-ribose 1-diphosphate</name>
        <dbReference type="ChEBI" id="CHEBI:58017"/>
    </ligand>
</feature>
<feature type="binding site" evidence="1">
    <location>
        <position position="193"/>
    </location>
    <ligand>
        <name>uracil</name>
        <dbReference type="ChEBI" id="CHEBI:17568"/>
    </ligand>
</feature>
<feature type="binding site" evidence="1">
    <location>
        <begin position="198"/>
        <end position="200"/>
    </location>
    <ligand>
        <name>uracil</name>
        <dbReference type="ChEBI" id="CHEBI:17568"/>
    </ligand>
</feature>
<feature type="binding site" evidence="1">
    <location>
        <position position="199"/>
    </location>
    <ligand>
        <name>5-phospho-alpha-D-ribose 1-diphosphate</name>
        <dbReference type="ChEBI" id="CHEBI:58017"/>
    </ligand>
</feature>
<reference key="1">
    <citation type="submission" date="2007-02" db="EMBL/GenBank/DDBJ databases">
        <title>Complete sequence of chromosome of Shewanella baltica OS155.</title>
        <authorList>
            <consortium name="US DOE Joint Genome Institute"/>
            <person name="Copeland A."/>
            <person name="Lucas S."/>
            <person name="Lapidus A."/>
            <person name="Barry K."/>
            <person name="Detter J.C."/>
            <person name="Glavina del Rio T."/>
            <person name="Hammon N."/>
            <person name="Israni S."/>
            <person name="Dalin E."/>
            <person name="Tice H."/>
            <person name="Pitluck S."/>
            <person name="Sims D.R."/>
            <person name="Brettin T."/>
            <person name="Bruce D."/>
            <person name="Han C."/>
            <person name="Tapia R."/>
            <person name="Brainard J."/>
            <person name="Schmutz J."/>
            <person name="Larimer F."/>
            <person name="Land M."/>
            <person name="Hauser L."/>
            <person name="Kyrpides N."/>
            <person name="Mikhailova N."/>
            <person name="Brettar I."/>
            <person name="Klappenbach J."/>
            <person name="Konstantinidis K."/>
            <person name="Rodrigues J."/>
            <person name="Tiedje J."/>
            <person name="Richardson P."/>
        </authorList>
    </citation>
    <scope>NUCLEOTIDE SEQUENCE [LARGE SCALE GENOMIC DNA]</scope>
    <source>
        <strain>OS155 / ATCC BAA-1091</strain>
    </source>
</reference>
<comment type="function">
    <text evidence="1">Catalyzes the conversion of uracil and 5-phospho-alpha-D-ribose 1-diphosphate (PRPP) to UMP and diphosphate.</text>
</comment>
<comment type="catalytic activity">
    <reaction evidence="1">
        <text>UMP + diphosphate = 5-phospho-alpha-D-ribose 1-diphosphate + uracil</text>
        <dbReference type="Rhea" id="RHEA:13017"/>
        <dbReference type="ChEBI" id="CHEBI:17568"/>
        <dbReference type="ChEBI" id="CHEBI:33019"/>
        <dbReference type="ChEBI" id="CHEBI:57865"/>
        <dbReference type="ChEBI" id="CHEBI:58017"/>
        <dbReference type="EC" id="2.4.2.9"/>
    </reaction>
</comment>
<comment type="cofactor">
    <cofactor evidence="1">
        <name>Mg(2+)</name>
        <dbReference type="ChEBI" id="CHEBI:18420"/>
    </cofactor>
    <text evidence="1">Binds 1 Mg(2+) ion per subunit. The magnesium is bound as Mg-PRPP.</text>
</comment>
<comment type="activity regulation">
    <text evidence="1">Allosterically activated by GTP.</text>
</comment>
<comment type="pathway">
    <text evidence="1">Pyrimidine metabolism; UMP biosynthesis via salvage pathway; UMP from uracil: step 1/1.</text>
</comment>
<comment type="similarity">
    <text evidence="1">Belongs to the UPRTase family.</text>
</comment>
<sequence length="208" mass="22542">MKVVEVKHPLVRHKIGLMREGDISTKRFRELAAEVGSLLTYEATADFETETVTIEGWNGPVEVDQIKGKKVTVVPILRAGLGMMDGVLEHIPSARISVVGIYRDEETLEPVPYFEKLASDMNERIALVVDPMLATGGSMIATVDLLKKRGCTSIKALVLVAAPEGIKALEAAHPDIELYTAAIDKCLNEKGYILPGLGDAGDKIFGTK</sequence>